<feature type="chain" id="PRO_0000098691" description="Methionine synthase">
    <location>
        <begin position="1"/>
        <end position="339"/>
    </location>
</feature>
<feature type="binding site" evidence="1">
    <location>
        <position position="212"/>
    </location>
    <ligand>
        <name>Zn(2+)</name>
        <dbReference type="ChEBI" id="CHEBI:29105"/>
        <note>catalytic</note>
    </ligand>
</feature>
<feature type="binding site" evidence="1">
    <location>
        <position position="214"/>
    </location>
    <ligand>
        <name>Zn(2+)</name>
        <dbReference type="ChEBI" id="CHEBI:29105"/>
        <note>catalytic</note>
    </ligand>
</feature>
<feature type="binding site" evidence="1">
    <location>
        <position position="295"/>
    </location>
    <ligand>
        <name>Zn(2+)</name>
        <dbReference type="ChEBI" id="CHEBI:29105"/>
        <note>catalytic</note>
    </ligand>
</feature>
<comment type="function">
    <text evidence="1">Catalyzes the transfer of a methyl group to L-homocysteine resulting in methionine formation. The physiological methyl donor is unknown.</text>
</comment>
<comment type="cofactor">
    <cofactor evidence="1">
        <name>Zn(2+)</name>
        <dbReference type="ChEBI" id="CHEBI:29105"/>
    </cofactor>
    <text evidence="1">Binds 1 zinc ion per subunit.</text>
</comment>
<comment type="pathway">
    <text evidence="1">Amino-acid biosynthesis; L-methionine biosynthesis via de novo pathway.</text>
</comment>
<comment type="similarity">
    <text evidence="1 2">Belongs to the archaeal MetE family.</text>
</comment>
<sequence length="339" mass="39421">MSDEITILPTTVIGSYPRPKWLRETIRLHRAGKVNQEDLEEAFNDAVVTVVRDHQEAGIDVPTDGEMRRDEMVEFFAERLSGFKFYGHVRVWGDHYYRKPSVTGKIKYNNPMLLDEVNFAKSVSYTQNLKVTITGPYTISEWSYNEYYKTQRDMAFDLAKVINQEIKNLVDIGIKVIQVDEPAIHTRKEDVEWAIDSINESIKGVNVKVVLHVCYGEYSYLEPHLDKLKVDQINLALKNYNYTPVKLFKKWDREIGVGVIDVHNRKIESVEEVAEDLRKLLEYFKPEMVWVNPDCGLKLLPRKIALQKLINMVKGTLIVREELKKKGYTNTTLKPLINR</sequence>
<evidence type="ECO:0000255" key="1">
    <source>
        <dbReference type="HAMAP-Rule" id="MF_00288"/>
    </source>
</evidence>
<evidence type="ECO:0000305" key="2"/>
<protein>
    <recommendedName>
        <fullName evidence="1">Methionine synthase</fullName>
        <ecNumber evidence="1">2.1.1.-</ecNumber>
    </recommendedName>
    <alternativeName>
        <fullName evidence="1">Homocysteine methyltransferase</fullName>
    </alternativeName>
</protein>
<dbReference type="EC" id="2.1.1.-" evidence="1"/>
<dbReference type="EMBL" id="CP000077">
    <property type="protein sequence ID" value="AAY80195.1"/>
    <property type="molecule type" value="Genomic_DNA"/>
</dbReference>
<dbReference type="RefSeq" id="WP_011277697.1">
    <property type="nucleotide sequence ID" value="NC_007181.1"/>
</dbReference>
<dbReference type="SMR" id="Q4JAI4"/>
<dbReference type="STRING" id="330779.Saci_0828"/>
<dbReference type="GeneID" id="14551341"/>
<dbReference type="KEGG" id="sai:Saci_0828"/>
<dbReference type="PATRIC" id="fig|330779.12.peg.792"/>
<dbReference type="eggNOG" id="arCOG01876">
    <property type="taxonomic scope" value="Archaea"/>
</dbReference>
<dbReference type="HOGENOM" id="CLU_040013_3_2_2"/>
<dbReference type="UniPathway" id="UPA00051"/>
<dbReference type="Proteomes" id="UP000001018">
    <property type="component" value="Chromosome"/>
</dbReference>
<dbReference type="GO" id="GO:0003871">
    <property type="term" value="F:5-methyltetrahydropteroyltriglutamate-homocysteine S-methyltransferase activity"/>
    <property type="evidence" value="ECO:0007669"/>
    <property type="project" value="InterPro"/>
</dbReference>
<dbReference type="GO" id="GO:0008270">
    <property type="term" value="F:zinc ion binding"/>
    <property type="evidence" value="ECO:0007669"/>
    <property type="project" value="InterPro"/>
</dbReference>
<dbReference type="GO" id="GO:0009086">
    <property type="term" value="P:methionine biosynthetic process"/>
    <property type="evidence" value="ECO:0007669"/>
    <property type="project" value="UniProtKB-UniRule"/>
</dbReference>
<dbReference type="GO" id="GO:0032259">
    <property type="term" value="P:methylation"/>
    <property type="evidence" value="ECO:0007669"/>
    <property type="project" value="UniProtKB-KW"/>
</dbReference>
<dbReference type="CDD" id="cd03311">
    <property type="entry name" value="CIMS_C_terminal_like"/>
    <property type="match status" value="1"/>
</dbReference>
<dbReference type="Gene3D" id="3.20.20.210">
    <property type="match status" value="1"/>
</dbReference>
<dbReference type="HAMAP" id="MF_00288">
    <property type="entry name" value="MetE"/>
    <property type="match status" value="1"/>
</dbReference>
<dbReference type="InterPro" id="IPR002629">
    <property type="entry name" value="Met_Synth_C/arc"/>
</dbReference>
<dbReference type="InterPro" id="IPR022921">
    <property type="entry name" value="MetE_arc"/>
</dbReference>
<dbReference type="InterPro" id="IPR038071">
    <property type="entry name" value="UROD/MetE-like_sf"/>
</dbReference>
<dbReference type="NCBIfam" id="NF003317">
    <property type="entry name" value="PRK04326.1"/>
    <property type="match status" value="1"/>
</dbReference>
<dbReference type="PANTHER" id="PTHR30519">
    <property type="entry name" value="5-METHYLTETRAHYDROPTEROYLTRIGLUTAMATE--HOMOCYSTEINE METHYLTRANSFERASE"/>
    <property type="match status" value="1"/>
</dbReference>
<dbReference type="Pfam" id="PF01717">
    <property type="entry name" value="Meth_synt_2"/>
    <property type="match status" value="1"/>
</dbReference>
<dbReference type="SUPFAM" id="SSF51726">
    <property type="entry name" value="UROD/MetE-like"/>
    <property type="match status" value="1"/>
</dbReference>
<reference key="1">
    <citation type="journal article" date="2005" name="J. Bacteriol.">
        <title>The genome of Sulfolobus acidocaldarius, a model organism of the Crenarchaeota.</title>
        <authorList>
            <person name="Chen L."/>
            <person name="Bruegger K."/>
            <person name="Skovgaard M."/>
            <person name="Redder P."/>
            <person name="She Q."/>
            <person name="Torarinsson E."/>
            <person name="Greve B."/>
            <person name="Awayez M."/>
            <person name="Zibat A."/>
            <person name="Klenk H.-P."/>
            <person name="Garrett R.A."/>
        </authorList>
    </citation>
    <scope>NUCLEOTIDE SEQUENCE [LARGE SCALE GENOMIC DNA]</scope>
    <source>
        <strain>ATCC 33909 / DSM 639 / JCM 8929 / NBRC 15157 / NCIMB 11770</strain>
    </source>
</reference>
<organism>
    <name type="scientific">Sulfolobus acidocaldarius (strain ATCC 33909 / DSM 639 / JCM 8929 / NBRC 15157 / NCIMB 11770)</name>
    <dbReference type="NCBI Taxonomy" id="330779"/>
    <lineage>
        <taxon>Archaea</taxon>
        <taxon>Thermoproteota</taxon>
        <taxon>Thermoprotei</taxon>
        <taxon>Sulfolobales</taxon>
        <taxon>Sulfolobaceae</taxon>
        <taxon>Sulfolobus</taxon>
    </lineage>
</organism>
<proteinExistence type="inferred from homology"/>
<accession>Q4JAI4</accession>
<name>METE_SULAC</name>
<gene>
    <name evidence="1" type="primary">metE</name>
    <name type="ordered locus">Saci_0828</name>
</gene>
<keyword id="KW-0028">Amino-acid biosynthesis</keyword>
<keyword id="KW-0479">Metal-binding</keyword>
<keyword id="KW-0486">Methionine biosynthesis</keyword>
<keyword id="KW-0489">Methyltransferase</keyword>
<keyword id="KW-1185">Reference proteome</keyword>
<keyword id="KW-0808">Transferase</keyword>
<keyword id="KW-0862">Zinc</keyword>